<keyword id="KW-0687">Ribonucleoprotein</keyword>
<keyword id="KW-0689">Ribosomal protein</keyword>
<keyword id="KW-0694">RNA-binding</keyword>
<keyword id="KW-0699">rRNA-binding</keyword>
<keyword id="KW-0820">tRNA-binding</keyword>
<name>RS7_BRUA1</name>
<protein>
    <recommendedName>
        <fullName evidence="1">Small ribosomal subunit protein uS7</fullName>
    </recommendedName>
    <alternativeName>
        <fullName evidence="2">30S ribosomal protein S7</fullName>
    </alternativeName>
</protein>
<organism>
    <name type="scientific">Brucella abortus (strain S19)</name>
    <dbReference type="NCBI Taxonomy" id="430066"/>
    <lineage>
        <taxon>Bacteria</taxon>
        <taxon>Pseudomonadati</taxon>
        <taxon>Pseudomonadota</taxon>
        <taxon>Alphaproteobacteria</taxon>
        <taxon>Hyphomicrobiales</taxon>
        <taxon>Brucellaceae</taxon>
        <taxon>Brucella/Ochrobactrum group</taxon>
        <taxon>Brucella</taxon>
    </lineage>
</organism>
<gene>
    <name evidence="1" type="primary">rpsG</name>
    <name type="ordered locus">BAbS19_I11750</name>
</gene>
<dbReference type="EMBL" id="CP000887">
    <property type="protein sequence ID" value="ACD72680.1"/>
    <property type="molecule type" value="Genomic_DNA"/>
</dbReference>
<dbReference type="RefSeq" id="WP_002964365.1">
    <property type="nucleotide sequence ID" value="NC_010742.1"/>
</dbReference>
<dbReference type="SMR" id="B2S683"/>
<dbReference type="GeneID" id="97533521"/>
<dbReference type="KEGG" id="bmc:BAbS19_I11750"/>
<dbReference type="HOGENOM" id="CLU_072226_1_1_5"/>
<dbReference type="Proteomes" id="UP000002565">
    <property type="component" value="Chromosome 1"/>
</dbReference>
<dbReference type="GO" id="GO:0015935">
    <property type="term" value="C:small ribosomal subunit"/>
    <property type="evidence" value="ECO:0007669"/>
    <property type="project" value="InterPro"/>
</dbReference>
<dbReference type="GO" id="GO:0019843">
    <property type="term" value="F:rRNA binding"/>
    <property type="evidence" value="ECO:0007669"/>
    <property type="project" value="UniProtKB-UniRule"/>
</dbReference>
<dbReference type="GO" id="GO:0003735">
    <property type="term" value="F:structural constituent of ribosome"/>
    <property type="evidence" value="ECO:0007669"/>
    <property type="project" value="InterPro"/>
</dbReference>
<dbReference type="GO" id="GO:0000049">
    <property type="term" value="F:tRNA binding"/>
    <property type="evidence" value="ECO:0007669"/>
    <property type="project" value="UniProtKB-UniRule"/>
</dbReference>
<dbReference type="GO" id="GO:0006412">
    <property type="term" value="P:translation"/>
    <property type="evidence" value="ECO:0007669"/>
    <property type="project" value="UniProtKB-UniRule"/>
</dbReference>
<dbReference type="CDD" id="cd14869">
    <property type="entry name" value="uS7_Bacteria"/>
    <property type="match status" value="1"/>
</dbReference>
<dbReference type="FunFam" id="1.10.455.10:FF:000001">
    <property type="entry name" value="30S ribosomal protein S7"/>
    <property type="match status" value="1"/>
</dbReference>
<dbReference type="Gene3D" id="1.10.455.10">
    <property type="entry name" value="Ribosomal protein S7 domain"/>
    <property type="match status" value="1"/>
</dbReference>
<dbReference type="HAMAP" id="MF_00480_B">
    <property type="entry name" value="Ribosomal_uS7_B"/>
    <property type="match status" value="1"/>
</dbReference>
<dbReference type="InterPro" id="IPR000235">
    <property type="entry name" value="Ribosomal_uS7"/>
</dbReference>
<dbReference type="InterPro" id="IPR005717">
    <property type="entry name" value="Ribosomal_uS7_bac/org-type"/>
</dbReference>
<dbReference type="InterPro" id="IPR020606">
    <property type="entry name" value="Ribosomal_uS7_CS"/>
</dbReference>
<dbReference type="InterPro" id="IPR023798">
    <property type="entry name" value="Ribosomal_uS7_dom"/>
</dbReference>
<dbReference type="InterPro" id="IPR036823">
    <property type="entry name" value="Ribosomal_uS7_dom_sf"/>
</dbReference>
<dbReference type="NCBIfam" id="TIGR01029">
    <property type="entry name" value="rpsG_bact"/>
    <property type="match status" value="1"/>
</dbReference>
<dbReference type="PANTHER" id="PTHR11205">
    <property type="entry name" value="RIBOSOMAL PROTEIN S7"/>
    <property type="match status" value="1"/>
</dbReference>
<dbReference type="Pfam" id="PF00177">
    <property type="entry name" value="Ribosomal_S7"/>
    <property type="match status" value="1"/>
</dbReference>
<dbReference type="PIRSF" id="PIRSF002122">
    <property type="entry name" value="RPS7p_RPS7a_RPS5e_RPS7o"/>
    <property type="match status" value="1"/>
</dbReference>
<dbReference type="SUPFAM" id="SSF47973">
    <property type="entry name" value="Ribosomal protein S7"/>
    <property type="match status" value="1"/>
</dbReference>
<dbReference type="PROSITE" id="PS00052">
    <property type="entry name" value="RIBOSOMAL_S7"/>
    <property type="match status" value="1"/>
</dbReference>
<sequence length="156" mass="17625">MSRRHKAEKREINPDPKFGDLVITKFMNAVMLHGKKSVAESIVYGALDAIEAKAKSEPVALFHQALDNVAPHIEVRSRRVGGATYQVPVDVRPERRQALAIRWLINAARGRNETTMVDRLSGELLDAANNRGSAVKKREDTHRMAEANRAFSHYRW</sequence>
<comment type="function">
    <text evidence="1">One of the primary rRNA binding proteins, it binds directly to 16S rRNA where it nucleates assembly of the head domain of the 30S subunit. Is located at the subunit interface close to the decoding center, probably blocks exit of the E-site tRNA.</text>
</comment>
<comment type="subunit">
    <text evidence="1">Part of the 30S ribosomal subunit. Contacts proteins S9 and S11.</text>
</comment>
<comment type="similarity">
    <text evidence="1">Belongs to the universal ribosomal protein uS7 family.</text>
</comment>
<feature type="chain" id="PRO_1000125904" description="Small ribosomal subunit protein uS7">
    <location>
        <begin position="1"/>
        <end position="156"/>
    </location>
</feature>
<proteinExistence type="inferred from homology"/>
<accession>B2S683</accession>
<evidence type="ECO:0000255" key="1">
    <source>
        <dbReference type="HAMAP-Rule" id="MF_00480"/>
    </source>
</evidence>
<evidence type="ECO:0000305" key="2"/>
<reference key="1">
    <citation type="journal article" date="2008" name="PLoS ONE">
        <title>Genome sequence of Brucella abortus vaccine strain S19 compared to virulent strains yields candidate virulence genes.</title>
        <authorList>
            <person name="Crasta O.R."/>
            <person name="Folkerts O."/>
            <person name="Fei Z."/>
            <person name="Mane S.P."/>
            <person name="Evans C."/>
            <person name="Martino-Catt S."/>
            <person name="Bricker B."/>
            <person name="Yu G."/>
            <person name="Du L."/>
            <person name="Sobral B.W."/>
        </authorList>
    </citation>
    <scope>NUCLEOTIDE SEQUENCE [LARGE SCALE GENOMIC DNA]</scope>
    <source>
        <strain>S19</strain>
    </source>
</reference>